<proteinExistence type="uncertain"/>
<feature type="chain" id="PRO_0000430998" description="Putative uncharacterized membrane protein YER107W-A">
    <location>
        <begin position="1"/>
        <end position="106"/>
    </location>
</feature>
<feature type="transmembrane region" description="Helical; Name=1" evidence="1">
    <location>
        <begin position="17"/>
        <end position="37"/>
    </location>
</feature>
<feature type="transmembrane region" description="Helical; Name=2" evidence="1">
    <location>
        <begin position="55"/>
        <end position="75"/>
    </location>
</feature>
<comment type="subcellular location">
    <subcellularLocation>
        <location evidence="1">Membrane</location>
        <topology evidence="1">Multi-pass membrane protein</topology>
    </subcellularLocation>
</comment>
<comment type="miscellaneous">
    <text evidence="2">Partially overlaps GLE2.</text>
</comment>
<comment type="caution">
    <text evidence="3">Product of a dubious gene prediction unlikely to encode a functional protein. Because of that it is not part of the S.cerevisiae S288c complete/reference proteome set.</text>
</comment>
<evidence type="ECO:0000255" key="1"/>
<evidence type="ECO:0000305" key="2"/>
<evidence type="ECO:0000305" key="3">
    <source>
    </source>
</evidence>
<evidence type="ECO:0000312" key="4">
    <source>
        <dbReference type="SGD" id="S000028755"/>
    </source>
</evidence>
<gene>
    <name evidence="4" type="ordered locus">YER107W-A</name>
</gene>
<protein>
    <recommendedName>
        <fullName evidence="2">Putative uncharacterized membrane protein YER107W-A</fullName>
    </recommendedName>
</protein>
<organism>
    <name type="scientific">Saccharomyces cerevisiae (strain ATCC 204508 / S288c)</name>
    <name type="common">Baker's yeast</name>
    <dbReference type="NCBI Taxonomy" id="559292"/>
    <lineage>
        <taxon>Eukaryota</taxon>
        <taxon>Fungi</taxon>
        <taxon>Dikarya</taxon>
        <taxon>Ascomycota</taxon>
        <taxon>Saccharomycotina</taxon>
        <taxon>Saccharomycetes</taxon>
        <taxon>Saccharomycetales</taxon>
        <taxon>Saccharomycetaceae</taxon>
        <taxon>Saccharomyces</taxon>
    </lineage>
</organism>
<name>YE107_YEAST</name>
<accession>A0A023PXJ7</accession>
<reference key="1">
    <citation type="journal article" date="1997" name="Nature">
        <title>The nucleotide sequence of Saccharomyces cerevisiae chromosome V.</title>
        <authorList>
            <person name="Dietrich F.S."/>
            <person name="Mulligan J.T."/>
            <person name="Hennessy K.M."/>
            <person name="Yelton M.A."/>
            <person name="Allen E."/>
            <person name="Araujo R."/>
            <person name="Aviles E."/>
            <person name="Berno A."/>
            <person name="Brennan T."/>
            <person name="Carpenter J."/>
            <person name="Chen E."/>
            <person name="Cherry J.M."/>
            <person name="Chung E."/>
            <person name="Duncan M."/>
            <person name="Guzman E."/>
            <person name="Hartzell G."/>
            <person name="Hunicke-Smith S."/>
            <person name="Hyman R.W."/>
            <person name="Kayser A."/>
            <person name="Komp C."/>
            <person name="Lashkari D."/>
            <person name="Lew H."/>
            <person name="Lin D."/>
            <person name="Mosedale D."/>
            <person name="Nakahara K."/>
            <person name="Namath A."/>
            <person name="Norgren R."/>
            <person name="Oefner P."/>
            <person name="Oh C."/>
            <person name="Petel F.X."/>
            <person name="Roberts D."/>
            <person name="Sehl P."/>
            <person name="Schramm S."/>
            <person name="Shogren T."/>
            <person name="Smith V."/>
            <person name="Taylor P."/>
            <person name="Wei Y."/>
            <person name="Botstein D."/>
            <person name="Davis R.W."/>
        </authorList>
    </citation>
    <scope>NUCLEOTIDE SEQUENCE [LARGE SCALE GENOMIC DNA]</scope>
    <source>
        <strain>ATCC 204508 / S288c</strain>
    </source>
</reference>
<reference key="2">
    <citation type="journal article" date="2014" name="G3 (Bethesda)">
        <title>The reference genome sequence of Saccharomyces cerevisiae: Then and now.</title>
        <authorList>
            <person name="Engel S.R."/>
            <person name="Dietrich F.S."/>
            <person name="Fisk D.G."/>
            <person name="Binkley G."/>
            <person name="Balakrishnan R."/>
            <person name="Costanzo M.C."/>
            <person name="Dwight S.S."/>
            <person name="Hitz B.C."/>
            <person name="Karra K."/>
            <person name="Nash R.S."/>
            <person name="Weng S."/>
            <person name="Wong E.D."/>
            <person name="Lloyd P."/>
            <person name="Skrzypek M.S."/>
            <person name="Miyasato S.R."/>
            <person name="Simison M."/>
            <person name="Cherry J.M."/>
        </authorList>
    </citation>
    <scope>GENOME REANNOTATION</scope>
    <source>
        <strain>ATCC 204508 / S288c</strain>
    </source>
</reference>
<dbReference type="EMBL" id="KJ412237">
    <property type="protein sequence ID" value="AHX39280.1"/>
    <property type="molecule type" value="Genomic_DNA"/>
</dbReference>
<dbReference type="PaxDb" id="4932-YER107W-A"/>
<dbReference type="EnsemblFungi" id="YER107W-A_mRNA">
    <property type="protein sequence ID" value="YER107W-A"/>
    <property type="gene ID" value="YER107W-A"/>
</dbReference>
<dbReference type="AGR" id="SGD:S000028755"/>
<dbReference type="SGD" id="S000028755">
    <property type="gene designation" value="YER107W-A"/>
</dbReference>
<dbReference type="HOGENOM" id="CLU_2224713_0_0_1"/>
<dbReference type="GO" id="GO:0016020">
    <property type="term" value="C:membrane"/>
    <property type="evidence" value="ECO:0007669"/>
    <property type="project" value="UniProtKB-SubCell"/>
</dbReference>
<sequence length="106" mass="11675">MKSCCGENAISDIESSAGLLMTISLAKSFSFAIAVLVPKAEVVFDRLKKDIVPHFSSSYVFLYFIVICRLRFMIFDQGGCAGMIGMVSLPNSYKSVSVQVKWLYSA</sequence>
<keyword id="KW-0472">Membrane</keyword>
<keyword id="KW-0812">Transmembrane</keyword>
<keyword id="KW-1133">Transmembrane helix</keyword>